<organism>
    <name type="scientific">Escherichia coli O81 (strain ED1a)</name>
    <dbReference type="NCBI Taxonomy" id="585397"/>
    <lineage>
        <taxon>Bacteria</taxon>
        <taxon>Pseudomonadati</taxon>
        <taxon>Pseudomonadota</taxon>
        <taxon>Gammaproteobacteria</taxon>
        <taxon>Enterobacterales</taxon>
        <taxon>Enterobacteriaceae</taxon>
        <taxon>Escherichia</taxon>
    </lineage>
</organism>
<dbReference type="EMBL" id="CU928162">
    <property type="protein sequence ID" value="CAR11023.1"/>
    <property type="molecule type" value="Genomic_DNA"/>
</dbReference>
<dbReference type="RefSeq" id="WP_000331450.1">
    <property type="nucleotide sequence ID" value="NC_011745.1"/>
</dbReference>
<dbReference type="SMR" id="B7MSU8"/>
<dbReference type="KEGG" id="ecq:ECED1_5068"/>
<dbReference type="HOGENOM" id="CLU_076075_2_0_6"/>
<dbReference type="Proteomes" id="UP000000748">
    <property type="component" value="Chromosome"/>
</dbReference>
<dbReference type="GO" id="GO:0005737">
    <property type="term" value="C:cytoplasm"/>
    <property type="evidence" value="ECO:0007669"/>
    <property type="project" value="UniProtKB-SubCell"/>
</dbReference>
<dbReference type="GO" id="GO:0046872">
    <property type="term" value="F:metal ion binding"/>
    <property type="evidence" value="ECO:0007669"/>
    <property type="project" value="UniProtKB-KW"/>
</dbReference>
<dbReference type="GO" id="GO:0030091">
    <property type="term" value="P:protein repair"/>
    <property type="evidence" value="ECO:0007669"/>
    <property type="project" value="UniProtKB-UniRule"/>
</dbReference>
<dbReference type="GO" id="GO:0051409">
    <property type="term" value="P:response to nitrosative stress"/>
    <property type="evidence" value="ECO:0007669"/>
    <property type="project" value="UniProtKB-UniRule"/>
</dbReference>
<dbReference type="GO" id="GO:0006979">
    <property type="term" value="P:response to oxidative stress"/>
    <property type="evidence" value="ECO:0007669"/>
    <property type="project" value="UniProtKB-UniRule"/>
</dbReference>
<dbReference type="CDD" id="cd12108">
    <property type="entry name" value="Hr-like"/>
    <property type="match status" value="1"/>
</dbReference>
<dbReference type="FunFam" id="1.20.120.520:FF:000001">
    <property type="entry name" value="Iron-sulfur cluster repair protein YtfE"/>
    <property type="match status" value="1"/>
</dbReference>
<dbReference type="Gene3D" id="1.20.120.520">
    <property type="entry name" value="nmb1532 protein domain like"/>
    <property type="match status" value="1"/>
</dbReference>
<dbReference type="HAMAP" id="MF_01606">
    <property type="entry name" value="RIC_YtfE"/>
    <property type="match status" value="1"/>
</dbReference>
<dbReference type="InterPro" id="IPR023742">
    <property type="entry name" value="FeS-repair_YftE"/>
</dbReference>
<dbReference type="InterPro" id="IPR012312">
    <property type="entry name" value="Hemerythrin-like"/>
</dbReference>
<dbReference type="InterPro" id="IPR019903">
    <property type="entry name" value="RIC_family"/>
</dbReference>
<dbReference type="NCBIfam" id="TIGR03652">
    <property type="entry name" value="FeS_repair_RIC"/>
    <property type="match status" value="1"/>
</dbReference>
<dbReference type="NCBIfam" id="NF008221">
    <property type="entry name" value="PRK10992.1"/>
    <property type="match status" value="1"/>
</dbReference>
<dbReference type="PANTHER" id="PTHR36438">
    <property type="entry name" value="IRON-SULFUR CLUSTER REPAIR PROTEIN YTFE"/>
    <property type="match status" value="1"/>
</dbReference>
<dbReference type="PANTHER" id="PTHR36438:SF1">
    <property type="entry name" value="IRON-SULFUR CLUSTER REPAIR PROTEIN YTFE"/>
    <property type="match status" value="1"/>
</dbReference>
<dbReference type="Pfam" id="PF01814">
    <property type="entry name" value="Hemerythrin"/>
    <property type="match status" value="1"/>
</dbReference>
<dbReference type="Pfam" id="PF04405">
    <property type="entry name" value="ScdA_N"/>
    <property type="match status" value="1"/>
</dbReference>
<gene>
    <name evidence="1" type="primary">ytfE</name>
    <name type="ordered locus">ECED1_5068</name>
</gene>
<comment type="function">
    <text evidence="1">Di-iron-containing protein involved in the repair of iron-sulfur clusters damaged by oxidative and nitrosative stress conditions.</text>
</comment>
<comment type="subunit">
    <text evidence="1">Homodimer.</text>
</comment>
<comment type="subcellular location">
    <subcellularLocation>
        <location evidence="1">Cytoplasm</location>
    </subcellularLocation>
</comment>
<comment type="similarity">
    <text evidence="1">Belongs to the RIC family. YtfE subfamily.</text>
</comment>
<feature type="chain" id="PRO_1000185841" description="Iron-sulfur cluster repair protein YtfE">
    <location>
        <begin position="1"/>
        <end position="220"/>
    </location>
</feature>
<protein>
    <recommendedName>
        <fullName evidence="1">Iron-sulfur cluster repair protein YtfE</fullName>
    </recommendedName>
</protein>
<proteinExistence type="inferred from homology"/>
<name>YTFE_ECO81</name>
<reference key="1">
    <citation type="journal article" date="2009" name="PLoS Genet.">
        <title>Organised genome dynamics in the Escherichia coli species results in highly diverse adaptive paths.</title>
        <authorList>
            <person name="Touchon M."/>
            <person name="Hoede C."/>
            <person name="Tenaillon O."/>
            <person name="Barbe V."/>
            <person name="Baeriswyl S."/>
            <person name="Bidet P."/>
            <person name="Bingen E."/>
            <person name="Bonacorsi S."/>
            <person name="Bouchier C."/>
            <person name="Bouvet O."/>
            <person name="Calteau A."/>
            <person name="Chiapello H."/>
            <person name="Clermont O."/>
            <person name="Cruveiller S."/>
            <person name="Danchin A."/>
            <person name="Diard M."/>
            <person name="Dossat C."/>
            <person name="Karoui M.E."/>
            <person name="Frapy E."/>
            <person name="Garry L."/>
            <person name="Ghigo J.M."/>
            <person name="Gilles A.M."/>
            <person name="Johnson J."/>
            <person name="Le Bouguenec C."/>
            <person name="Lescat M."/>
            <person name="Mangenot S."/>
            <person name="Martinez-Jehanne V."/>
            <person name="Matic I."/>
            <person name="Nassif X."/>
            <person name="Oztas S."/>
            <person name="Petit M.A."/>
            <person name="Pichon C."/>
            <person name="Rouy Z."/>
            <person name="Ruf C.S."/>
            <person name="Schneider D."/>
            <person name="Tourret J."/>
            <person name="Vacherie B."/>
            <person name="Vallenet D."/>
            <person name="Medigue C."/>
            <person name="Rocha E.P.C."/>
            <person name="Denamur E."/>
        </authorList>
    </citation>
    <scope>NUCLEOTIDE SEQUENCE [LARGE SCALE GENOMIC DNA]</scope>
    <source>
        <strain>ED1a</strain>
    </source>
</reference>
<evidence type="ECO:0000255" key="1">
    <source>
        <dbReference type="HAMAP-Rule" id="MF_01606"/>
    </source>
</evidence>
<sequence length="220" mass="24897">MAYRDQPLGELALSIPRASALFRKYDMDYCCGGKQTLARAAARKELDVDVIEAELAKLAEQPIEKDWRSAPLAEIIDHIIVRYHDRHREQLPELILQATKVERVHADKPSVPKGLTKYLTMLHEELSSHMMKEEQILFPMIKQGMGSQAMGPISVMESEHDEAGELLEVIKHTTNNVTPPPEACTTWKAMYNGINELIDDLMEHISLENNILFPRALAGE</sequence>
<keyword id="KW-0963">Cytoplasm</keyword>
<keyword id="KW-0408">Iron</keyword>
<keyword id="KW-0479">Metal-binding</keyword>
<keyword id="KW-0346">Stress response</keyword>
<accession>B7MSU8</accession>